<protein>
    <recommendedName>
        <fullName evidence="1">Protein-L-isoaspartate O-methyltransferase</fullName>
        <ecNumber evidence="1">2.1.1.77</ecNumber>
    </recommendedName>
    <alternativeName>
        <fullName evidence="1">L-isoaspartyl protein carboxyl methyltransferase</fullName>
    </alternativeName>
    <alternativeName>
        <fullName evidence="1">Protein L-isoaspartyl methyltransferase</fullName>
    </alternativeName>
    <alternativeName>
        <fullName evidence="1">Protein-beta-aspartate methyltransferase</fullName>
        <shortName evidence="1">PIMT</shortName>
    </alternativeName>
</protein>
<gene>
    <name evidence="1" type="primary">pcm</name>
    <name type="ordered locus">Bcen2424_1822</name>
</gene>
<dbReference type="EC" id="2.1.1.77" evidence="1"/>
<dbReference type="EMBL" id="CP000458">
    <property type="protein sequence ID" value="ABK08573.1"/>
    <property type="molecule type" value="Genomic_DNA"/>
</dbReference>
<dbReference type="RefSeq" id="WP_011549682.1">
    <property type="nucleotide sequence ID" value="NC_008542.1"/>
</dbReference>
<dbReference type="SMR" id="A0K7U6"/>
<dbReference type="KEGG" id="bch:Bcen2424_1822"/>
<dbReference type="HOGENOM" id="CLU_055432_1_0_4"/>
<dbReference type="GO" id="GO:0005737">
    <property type="term" value="C:cytoplasm"/>
    <property type="evidence" value="ECO:0007669"/>
    <property type="project" value="UniProtKB-SubCell"/>
</dbReference>
<dbReference type="GO" id="GO:0004719">
    <property type="term" value="F:protein-L-isoaspartate (D-aspartate) O-methyltransferase activity"/>
    <property type="evidence" value="ECO:0007669"/>
    <property type="project" value="UniProtKB-UniRule"/>
</dbReference>
<dbReference type="GO" id="GO:0032259">
    <property type="term" value="P:methylation"/>
    <property type="evidence" value="ECO:0007669"/>
    <property type="project" value="UniProtKB-KW"/>
</dbReference>
<dbReference type="GO" id="GO:0036211">
    <property type="term" value="P:protein modification process"/>
    <property type="evidence" value="ECO:0007669"/>
    <property type="project" value="UniProtKB-UniRule"/>
</dbReference>
<dbReference type="GO" id="GO:0030091">
    <property type="term" value="P:protein repair"/>
    <property type="evidence" value="ECO:0007669"/>
    <property type="project" value="UniProtKB-UniRule"/>
</dbReference>
<dbReference type="CDD" id="cd02440">
    <property type="entry name" value="AdoMet_MTases"/>
    <property type="match status" value="1"/>
</dbReference>
<dbReference type="FunFam" id="3.40.50.150:FF:000010">
    <property type="entry name" value="Protein-L-isoaspartate O-methyltransferase"/>
    <property type="match status" value="1"/>
</dbReference>
<dbReference type="Gene3D" id="3.40.50.150">
    <property type="entry name" value="Vaccinia Virus protein VP39"/>
    <property type="match status" value="1"/>
</dbReference>
<dbReference type="HAMAP" id="MF_00090">
    <property type="entry name" value="PIMT"/>
    <property type="match status" value="1"/>
</dbReference>
<dbReference type="InterPro" id="IPR000682">
    <property type="entry name" value="PCMT"/>
</dbReference>
<dbReference type="InterPro" id="IPR029063">
    <property type="entry name" value="SAM-dependent_MTases_sf"/>
</dbReference>
<dbReference type="NCBIfam" id="TIGR00080">
    <property type="entry name" value="pimt"/>
    <property type="match status" value="1"/>
</dbReference>
<dbReference type="NCBIfam" id="NF001453">
    <property type="entry name" value="PRK00312.1"/>
    <property type="match status" value="1"/>
</dbReference>
<dbReference type="PANTHER" id="PTHR11579">
    <property type="entry name" value="PROTEIN-L-ISOASPARTATE O-METHYLTRANSFERASE"/>
    <property type="match status" value="1"/>
</dbReference>
<dbReference type="PANTHER" id="PTHR11579:SF0">
    <property type="entry name" value="PROTEIN-L-ISOASPARTATE(D-ASPARTATE) O-METHYLTRANSFERASE"/>
    <property type="match status" value="1"/>
</dbReference>
<dbReference type="Pfam" id="PF01135">
    <property type="entry name" value="PCMT"/>
    <property type="match status" value="1"/>
</dbReference>
<dbReference type="SUPFAM" id="SSF53335">
    <property type="entry name" value="S-adenosyl-L-methionine-dependent methyltransferases"/>
    <property type="match status" value="1"/>
</dbReference>
<dbReference type="PROSITE" id="PS01279">
    <property type="entry name" value="PCMT"/>
    <property type="match status" value="1"/>
</dbReference>
<evidence type="ECO:0000255" key="1">
    <source>
        <dbReference type="HAMAP-Rule" id="MF_00090"/>
    </source>
</evidence>
<evidence type="ECO:0000256" key="2">
    <source>
        <dbReference type="SAM" id="MobiDB-lite"/>
    </source>
</evidence>
<accession>A0K7U6</accession>
<feature type="chain" id="PRO_0000351827" description="Protein-L-isoaspartate O-methyltransferase">
    <location>
        <begin position="1"/>
        <end position="310"/>
    </location>
</feature>
<feature type="region of interest" description="Disordered" evidence="2">
    <location>
        <begin position="1"/>
        <end position="41"/>
    </location>
</feature>
<feature type="compositionally biased region" description="Basic and acidic residues" evidence="2">
    <location>
        <begin position="14"/>
        <end position="29"/>
    </location>
</feature>
<feature type="active site" evidence="1">
    <location>
        <position position="157"/>
    </location>
</feature>
<comment type="function">
    <text evidence="1">Catalyzes the methyl esterification of L-isoaspartyl residues in peptides and proteins that result from spontaneous decomposition of normal L-aspartyl and L-asparaginyl residues. It plays a role in the repair and/or degradation of damaged proteins.</text>
</comment>
<comment type="catalytic activity">
    <reaction evidence="1">
        <text>[protein]-L-isoaspartate + S-adenosyl-L-methionine = [protein]-L-isoaspartate alpha-methyl ester + S-adenosyl-L-homocysteine</text>
        <dbReference type="Rhea" id="RHEA:12705"/>
        <dbReference type="Rhea" id="RHEA-COMP:12143"/>
        <dbReference type="Rhea" id="RHEA-COMP:12144"/>
        <dbReference type="ChEBI" id="CHEBI:57856"/>
        <dbReference type="ChEBI" id="CHEBI:59789"/>
        <dbReference type="ChEBI" id="CHEBI:90596"/>
        <dbReference type="ChEBI" id="CHEBI:90598"/>
        <dbReference type="EC" id="2.1.1.77"/>
    </reaction>
</comment>
<comment type="subcellular location">
    <subcellularLocation>
        <location evidence="1">Cytoplasm</location>
    </subcellularLocation>
</comment>
<comment type="similarity">
    <text evidence="1">Belongs to the methyltransferase superfamily. L-isoaspartyl/D-aspartyl protein methyltransferase family.</text>
</comment>
<organism>
    <name type="scientific">Burkholderia cenocepacia (strain HI2424)</name>
    <dbReference type="NCBI Taxonomy" id="331272"/>
    <lineage>
        <taxon>Bacteria</taxon>
        <taxon>Pseudomonadati</taxon>
        <taxon>Pseudomonadota</taxon>
        <taxon>Betaproteobacteria</taxon>
        <taxon>Burkholderiales</taxon>
        <taxon>Burkholderiaceae</taxon>
        <taxon>Burkholderia</taxon>
        <taxon>Burkholderia cepacia complex</taxon>
    </lineage>
</organism>
<reference key="1">
    <citation type="submission" date="2006-08" db="EMBL/GenBank/DDBJ databases">
        <title>Complete sequence of chromosome 1 of Burkholderia cenocepacia HI2424.</title>
        <authorList>
            <person name="Copeland A."/>
            <person name="Lucas S."/>
            <person name="Lapidus A."/>
            <person name="Barry K."/>
            <person name="Detter J.C."/>
            <person name="Glavina del Rio T."/>
            <person name="Hammon N."/>
            <person name="Israni S."/>
            <person name="Pitluck S."/>
            <person name="Chain P."/>
            <person name="Malfatti S."/>
            <person name="Shin M."/>
            <person name="Vergez L."/>
            <person name="Schmutz J."/>
            <person name="Larimer F."/>
            <person name="Land M."/>
            <person name="Hauser L."/>
            <person name="Kyrpides N."/>
            <person name="Kim E."/>
            <person name="LiPuma J.J."/>
            <person name="Gonzalez C.F."/>
            <person name="Konstantinidis K."/>
            <person name="Tiedje J.M."/>
            <person name="Richardson P."/>
        </authorList>
    </citation>
    <scope>NUCLEOTIDE SEQUENCE [LARGE SCALE GENOMIC DNA]</scope>
    <source>
        <strain>HI2424</strain>
    </source>
</reference>
<sequence length="310" mass="32970">MSGERAKRFPLALEDLKRAPRKSEGRPGERQTAGAVPKAADKPAAVLKPVAVKPAAVRAPLPGIAAAKPATAPKPTALKPALPKPAAPSIAPAGAFALTSERVRERMVERLRANGVTDARVLDAMAAVPRHLFVDPGLATQAYEDSALPIGHQQTISKPSVVARMIELAMAGRTLERVLEIGTGCGYQAAVLSHVARDVYSIERIKPLYERAKLNLRPLRVPNIRLHYGDGRVGLPSAAPFDAIVIAAAGLDVPQALLEQLAIGGRLVAPVGAQSGQHQVLTLVERVAHAQWRESRLDRVFFVPLKSGVI</sequence>
<name>PIMT_BURCH</name>
<keyword id="KW-0963">Cytoplasm</keyword>
<keyword id="KW-0489">Methyltransferase</keyword>
<keyword id="KW-0949">S-adenosyl-L-methionine</keyword>
<keyword id="KW-0808">Transferase</keyword>
<proteinExistence type="inferred from homology"/>